<protein>
    <recommendedName>
        <fullName>Mediator of RNA polymerase II transcription subunit 28</fullName>
    </recommendedName>
    <alternativeName>
        <fullName>Mediator complex subunit 28</fullName>
    </alternativeName>
</protein>
<proteinExistence type="inferred from homology"/>
<gene>
    <name type="primary">MED28</name>
    <name type="ORF">AAEL000468</name>
</gene>
<keyword id="KW-0010">Activator</keyword>
<keyword id="KW-0175">Coiled coil</keyword>
<keyword id="KW-0539">Nucleus</keyword>
<keyword id="KW-1185">Reference proteome</keyword>
<keyword id="KW-0804">Transcription</keyword>
<keyword id="KW-0805">Transcription regulation</keyword>
<organism>
    <name type="scientific">Aedes aegypti</name>
    <name type="common">Yellowfever mosquito</name>
    <name type="synonym">Culex aegypti</name>
    <dbReference type="NCBI Taxonomy" id="7159"/>
    <lineage>
        <taxon>Eukaryota</taxon>
        <taxon>Metazoa</taxon>
        <taxon>Ecdysozoa</taxon>
        <taxon>Arthropoda</taxon>
        <taxon>Hexapoda</taxon>
        <taxon>Insecta</taxon>
        <taxon>Pterygota</taxon>
        <taxon>Neoptera</taxon>
        <taxon>Endopterygota</taxon>
        <taxon>Diptera</taxon>
        <taxon>Nematocera</taxon>
        <taxon>Culicoidea</taxon>
        <taxon>Culicidae</taxon>
        <taxon>Culicinae</taxon>
        <taxon>Aedini</taxon>
        <taxon>Aedes</taxon>
        <taxon>Stegomyia</taxon>
    </lineage>
</organism>
<feature type="chain" id="PRO_0000305698" description="Mediator of RNA polymerase II transcription subunit 28">
    <location>
        <begin position="1"/>
        <end position="184"/>
    </location>
</feature>
<feature type="coiled-coil region" evidence="2">
    <location>
        <begin position="77"/>
        <end position="105"/>
    </location>
</feature>
<dbReference type="EMBL" id="CH477193">
    <property type="protein sequence ID" value="EAT48533.1"/>
    <property type="molecule type" value="Genomic_DNA"/>
</dbReference>
<dbReference type="RefSeq" id="XP_001656431.2">
    <property type="nucleotide sequence ID" value="XM_001656381.2"/>
</dbReference>
<dbReference type="SMR" id="Q17P98"/>
<dbReference type="FunCoup" id="Q17P98">
    <property type="interactions" value="1936"/>
</dbReference>
<dbReference type="STRING" id="7159.Q17P98"/>
<dbReference type="VEuPathDB" id="VectorBase:AAEL000468"/>
<dbReference type="InParanoid" id="Q17P98"/>
<dbReference type="OMA" id="NIGMPER"/>
<dbReference type="OrthoDB" id="2286203at2759"/>
<dbReference type="Proteomes" id="UP000008820">
    <property type="component" value="Chromosome 3"/>
</dbReference>
<dbReference type="Proteomes" id="UP000682892">
    <property type="component" value="Unassembled WGS sequence"/>
</dbReference>
<dbReference type="GO" id="GO:0016592">
    <property type="term" value="C:mediator complex"/>
    <property type="evidence" value="ECO:0007669"/>
    <property type="project" value="TreeGrafter"/>
</dbReference>
<dbReference type="InterPro" id="IPR021640">
    <property type="entry name" value="Mediator_Med28"/>
</dbReference>
<dbReference type="PANTHER" id="PTHR13512">
    <property type="entry name" value="MEDIATOR COMPLEX SUBUNIT 28"/>
    <property type="match status" value="1"/>
</dbReference>
<dbReference type="PANTHER" id="PTHR13512:SF2">
    <property type="entry name" value="MEDIATOR OF RNA POLYMERASE II TRANSCRIPTION SUBUNIT 28"/>
    <property type="match status" value="1"/>
</dbReference>
<dbReference type="Pfam" id="PF11594">
    <property type="entry name" value="Med28"/>
    <property type="match status" value="1"/>
</dbReference>
<sequence length="184" mass="20873">MASSSNVNGNLVDELEEAFQSCIHALTKEESATGVDKDEIKLEVDQTTLKFIDLARQMEAFFLQKRFLLSALKPDLLLKEENFDLKQEIARKDELIRKHYEKIESWKNLLSDQQNYNKPIQSLPPDMRGNLTGGVPGGPGMMPGGIGMPMQNSMQVQQMQAQQQQMQMLQAQQMQQQMQSMPIG</sequence>
<accession>Q17P98</accession>
<reference key="1">
    <citation type="journal article" date="2007" name="Science">
        <title>Genome sequence of Aedes aegypti, a major arbovirus vector.</title>
        <authorList>
            <person name="Nene V."/>
            <person name="Wortman J.R."/>
            <person name="Lawson D."/>
            <person name="Haas B.J."/>
            <person name="Kodira C.D."/>
            <person name="Tu Z.J."/>
            <person name="Loftus B.J."/>
            <person name="Xi Z."/>
            <person name="Megy K."/>
            <person name="Grabherr M."/>
            <person name="Ren Q."/>
            <person name="Zdobnov E.M."/>
            <person name="Lobo N.F."/>
            <person name="Campbell K.S."/>
            <person name="Brown S.E."/>
            <person name="Bonaldo M.F."/>
            <person name="Zhu J."/>
            <person name="Sinkins S.P."/>
            <person name="Hogenkamp D.G."/>
            <person name="Amedeo P."/>
            <person name="Arensburger P."/>
            <person name="Atkinson P.W."/>
            <person name="Bidwell S.L."/>
            <person name="Biedler J."/>
            <person name="Birney E."/>
            <person name="Bruggner R.V."/>
            <person name="Costas J."/>
            <person name="Coy M.R."/>
            <person name="Crabtree J."/>
            <person name="Crawford M."/>
            <person name="DeBruyn B."/>
            <person name="DeCaprio D."/>
            <person name="Eiglmeier K."/>
            <person name="Eisenstadt E."/>
            <person name="El-Dorry H."/>
            <person name="Gelbart W.M."/>
            <person name="Gomes S.L."/>
            <person name="Hammond M."/>
            <person name="Hannick L.I."/>
            <person name="Hogan J.R."/>
            <person name="Holmes M.H."/>
            <person name="Jaffe D."/>
            <person name="Johnston S.J."/>
            <person name="Kennedy R.C."/>
            <person name="Koo H."/>
            <person name="Kravitz S."/>
            <person name="Kriventseva E.V."/>
            <person name="Kulp D."/>
            <person name="Labutti K."/>
            <person name="Lee E."/>
            <person name="Li S."/>
            <person name="Lovin D.D."/>
            <person name="Mao C."/>
            <person name="Mauceli E."/>
            <person name="Menck C.F."/>
            <person name="Miller J.R."/>
            <person name="Montgomery P."/>
            <person name="Mori A."/>
            <person name="Nascimento A.L."/>
            <person name="Naveira H.F."/>
            <person name="Nusbaum C."/>
            <person name="O'Leary S.B."/>
            <person name="Orvis J."/>
            <person name="Pertea M."/>
            <person name="Quesneville H."/>
            <person name="Reidenbach K.R."/>
            <person name="Rogers Y.-H.C."/>
            <person name="Roth C.W."/>
            <person name="Schneider J.R."/>
            <person name="Schatz M."/>
            <person name="Shumway M."/>
            <person name="Stanke M."/>
            <person name="Stinson E.O."/>
            <person name="Tubio J.M.C."/>
            <person name="Vanzee J.P."/>
            <person name="Verjovski-Almeida S."/>
            <person name="Werner D."/>
            <person name="White O.R."/>
            <person name="Wyder S."/>
            <person name="Zeng Q."/>
            <person name="Zhao Q."/>
            <person name="Zhao Y."/>
            <person name="Hill C.A."/>
            <person name="Raikhel A.S."/>
            <person name="Soares M.B."/>
            <person name="Knudson D.L."/>
            <person name="Lee N.H."/>
            <person name="Galagan J."/>
            <person name="Salzberg S.L."/>
            <person name="Paulsen I.T."/>
            <person name="Dimopoulos G."/>
            <person name="Collins F.H."/>
            <person name="Bruce B."/>
            <person name="Fraser-Liggett C.M."/>
            <person name="Severson D.W."/>
        </authorList>
    </citation>
    <scope>NUCLEOTIDE SEQUENCE [LARGE SCALE GENOMIC DNA]</scope>
    <source>
        <strain>LVPib12</strain>
    </source>
</reference>
<evidence type="ECO:0000250" key="1"/>
<evidence type="ECO:0000255" key="2"/>
<evidence type="ECO:0000305" key="3"/>
<name>MED28_AEDAE</name>
<comment type="function">
    <text evidence="1">Component of the Mediator complex, a coactivator involved in the regulated transcription of nearly all RNA polymerase II-dependent genes. Mediator functions as a bridge to convey information from gene-specific regulatory proteins to the basal RNA polymerase II transcription machinery. Mediator is recruited to promoters by direct interactions with regulatory proteins and serves as a scaffold for the assembly of a functional preinitiation complex with RNA polymerase II and the general transcription factors (By similarity).</text>
</comment>
<comment type="subunit">
    <text evidence="1">Component of the Mediator complex.</text>
</comment>
<comment type="subcellular location">
    <subcellularLocation>
        <location evidence="3">Nucleus</location>
    </subcellularLocation>
</comment>
<comment type="similarity">
    <text evidence="3">Belongs to the Mediator complex subunit 28 family.</text>
</comment>